<keyword id="KW-0963">Cytoplasm</keyword>
<keyword id="KW-0521">NADP</keyword>
<keyword id="KW-0560">Oxidoreductase</keyword>
<keyword id="KW-0671">Queuosine biosynthesis</keyword>
<evidence type="ECO:0000255" key="1">
    <source>
        <dbReference type="HAMAP-Rule" id="MF_00818"/>
    </source>
</evidence>
<organism>
    <name type="scientific">Acidithiobacillus ferrooxidans (strain ATCC 53993 / BNL-5-31)</name>
    <name type="common">Leptospirillum ferrooxidans (ATCC 53993)</name>
    <dbReference type="NCBI Taxonomy" id="380394"/>
    <lineage>
        <taxon>Bacteria</taxon>
        <taxon>Pseudomonadati</taxon>
        <taxon>Pseudomonadota</taxon>
        <taxon>Acidithiobacillia</taxon>
        <taxon>Acidithiobacillales</taxon>
        <taxon>Acidithiobacillaceae</taxon>
        <taxon>Acidithiobacillus</taxon>
    </lineage>
</organism>
<sequence>MPSQPSRELERFSNPHPERDYVVHMDLPEFTCLCPLTGQPDFAHFMLDFIPDQHNVELKSLKLYLWSFRDEGAFHEAMTNRIADDLIGLINPRYLRLLGRWYVRGGITTDVLIEHRQPGWQNPDILGQLPTVRWAQHQPGH</sequence>
<feature type="chain" id="PRO_1000134289" description="NADPH-dependent 7-cyano-7-deazaguanine reductase">
    <location>
        <begin position="1"/>
        <end position="141"/>
    </location>
</feature>
<feature type="active site" description="Thioimide intermediate" evidence="1">
    <location>
        <position position="34"/>
    </location>
</feature>
<feature type="active site" description="Proton donor" evidence="1">
    <location>
        <position position="41"/>
    </location>
</feature>
<feature type="binding site" evidence="1">
    <location>
        <begin position="56"/>
        <end position="58"/>
    </location>
    <ligand>
        <name>substrate</name>
    </ligand>
</feature>
<feature type="binding site" evidence="1">
    <location>
        <begin position="75"/>
        <end position="76"/>
    </location>
    <ligand>
        <name>substrate</name>
    </ligand>
</feature>
<reference key="1">
    <citation type="submission" date="2008-08" db="EMBL/GenBank/DDBJ databases">
        <title>Complete sequence of Acidithiobacillus ferrooxidans ATCC 53993.</title>
        <authorList>
            <person name="Lucas S."/>
            <person name="Copeland A."/>
            <person name="Lapidus A."/>
            <person name="Glavina del Rio T."/>
            <person name="Dalin E."/>
            <person name="Tice H."/>
            <person name="Bruce D."/>
            <person name="Goodwin L."/>
            <person name="Pitluck S."/>
            <person name="Sims D."/>
            <person name="Brettin T."/>
            <person name="Detter J.C."/>
            <person name="Han C."/>
            <person name="Kuske C.R."/>
            <person name="Larimer F."/>
            <person name="Land M."/>
            <person name="Hauser L."/>
            <person name="Kyrpides N."/>
            <person name="Lykidis A."/>
            <person name="Borole A.P."/>
        </authorList>
    </citation>
    <scope>NUCLEOTIDE SEQUENCE [LARGE SCALE GENOMIC DNA]</scope>
    <source>
        <strain>ATCC 53993 / BNL-5-31</strain>
    </source>
</reference>
<dbReference type="EC" id="1.7.1.13" evidence="1"/>
<dbReference type="EMBL" id="CP001132">
    <property type="protein sequence ID" value="ACH83148.1"/>
    <property type="molecule type" value="Genomic_DNA"/>
</dbReference>
<dbReference type="RefSeq" id="WP_012536332.1">
    <property type="nucleotide sequence ID" value="NC_011206.1"/>
</dbReference>
<dbReference type="SMR" id="B5EP57"/>
<dbReference type="GeneID" id="65280098"/>
<dbReference type="KEGG" id="afe:Lferr_0899"/>
<dbReference type="eggNOG" id="COG0780">
    <property type="taxonomic scope" value="Bacteria"/>
</dbReference>
<dbReference type="HOGENOM" id="CLU_102489_1_0_6"/>
<dbReference type="UniPathway" id="UPA00392"/>
<dbReference type="GO" id="GO:0005737">
    <property type="term" value="C:cytoplasm"/>
    <property type="evidence" value="ECO:0007669"/>
    <property type="project" value="UniProtKB-SubCell"/>
</dbReference>
<dbReference type="GO" id="GO:0033739">
    <property type="term" value="F:preQ1 synthase activity"/>
    <property type="evidence" value="ECO:0007669"/>
    <property type="project" value="UniProtKB-UniRule"/>
</dbReference>
<dbReference type="GO" id="GO:0008616">
    <property type="term" value="P:queuosine biosynthetic process"/>
    <property type="evidence" value="ECO:0007669"/>
    <property type="project" value="UniProtKB-UniRule"/>
</dbReference>
<dbReference type="GO" id="GO:0006400">
    <property type="term" value="P:tRNA modification"/>
    <property type="evidence" value="ECO:0007669"/>
    <property type="project" value="UniProtKB-UniRule"/>
</dbReference>
<dbReference type="Gene3D" id="3.30.1130.10">
    <property type="match status" value="1"/>
</dbReference>
<dbReference type="HAMAP" id="MF_00818">
    <property type="entry name" value="QueF_type1"/>
    <property type="match status" value="1"/>
</dbReference>
<dbReference type="InterPro" id="IPR043133">
    <property type="entry name" value="GTP-CH-I_C/QueF"/>
</dbReference>
<dbReference type="InterPro" id="IPR050084">
    <property type="entry name" value="NADPH_dep_7-cyano-7-deazaG_red"/>
</dbReference>
<dbReference type="InterPro" id="IPR029500">
    <property type="entry name" value="QueF"/>
</dbReference>
<dbReference type="InterPro" id="IPR016856">
    <property type="entry name" value="QueF_type1"/>
</dbReference>
<dbReference type="NCBIfam" id="TIGR03139">
    <property type="entry name" value="QueF-II"/>
    <property type="match status" value="1"/>
</dbReference>
<dbReference type="PANTHER" id="PTHR34354">
    <property type="entry name" value="NADPH-DEPENDENT 7-CYANO-7-DEAZAGUANINE REDUCTASE"/>
    <property type="match status" value="1"/>
</dbReference>
<dbReference type="PANTHER" id="PTHR34354:SF1">
    <property type="entry name" value="NADPH-DEPENDENT 7-CYANO-7-DEAZAGUANINE REDUCTASE"/>
    <property type="match status" value="1"/>
</dbReference>
<dbReference type="Pfam" id="PF14489">
    <property type="entry name" value="QueF"/>
    <property type="match status" value="1"/>
</dbReference>
<dbReference type="PIRSF" id="PIRSF027377">
    <property type="entry name" value="Nitrile_oxidored_QueF"/>
    <property type="match status" value="1"/>
</dbReference>
<dbReference type="SUPFAM" id="SSF55620">
    <property type="entry name" value="Tetrahydrobiopterin biosynthesis enzymes-like"/>
    <property type="match status" value="1"/>
</dbReference>
<comment type="function">
    <text evidence="1">Catalyzes the NADPH-dependent reduction of 7-cyano-7-deazaguanine (preQ0) to 7-aminomethyl-7-deazaguanine (preQ1).</text>
</comment>
<comment type="catalytic activity">
    <reaction evidence="1">
        <text>7-aminomethyl-7-carbaguanine + 2 NADP(+) = 7-cyano-7-deazaguanine + 2 NADPH + 3 H(+)</text>
        <dbReference type="Rhea" id="RHEA:13409"/>
        <dbReference type="ChEBI" id="CHEBI:15378"/>
        <dbReference type="ChEBI" id="CHEBI:45075"/>
        <dbReference type="ChEBI" id="CHEBI:57783"/>
        <dbReference type="ChEBI" id="CHEBI:58349"/>
        <dbReference type="ChEBI" id="CHEBI:58703"/>
        <dbReference type="EC" id="1.7.1.13"/>
    </reaction>
</comment>
<comment type="pathway">
    <text evidence="1">tRNA modification; tRNA-queuosine biosynthesis.</text>
</comment>
<comment type="subcellular location">
    <subcellularLocation>
        <location evidence="1">Cytoplasm</location>
    </subcellularLocation>
</comment>
<comment type="similarity">
    <text evidence="1">Belongs to the GTP cyclohydrolase I family. QueF type 1 subfamily.</text>
</comment>
<proteinExistence type="inferred from homology"/>
<protein>
    <recommendedName>
        <fullName evidence="1">NADPH-dependent 7-cyano-7-deazaguanine reductase</fullName>
        <ecNumber evidence="1">1.7.1.13</ecNumber>
    </recommendedName>
    <alternativeName>
        <fullName evidence="1">7-cyano-7-carbaguanine reductase</fullName>
    </alternativeName>
    <alternativeName>
        <fullName evidence="1">NADPH-dependent nitrile oxidoreductase</fullName>
    </alternativeName>
    <alternativeName>
        <fullName evidence="1">PreQ(0) reductase</fullName>
    </alternativeName>
</protein>
<accession>B5EP57</accession>
<name>QUEF_ACIF5</name>
<gene>
    <name evidence="1" type="primary">queF</name>
    <name type="ordered locus">Lferr_0899</name>
</gene>